<feature type="chain" id="PRO_0000291266" description="Dual specificity tyrosine-phosphorylation-regulated kinase 2">
    <location>
        <begin position="1"/>
        <end position="526"/>
    </location>
</feature>
<feature type="domain" description="Protein kinase" evidence="4">
    <location>
        <begin position="147"/>
        <end position="460"/>
    </location>
</feature>
<feature type="region of interest" description="Disordered" evidence="6">
    <location>
        <begin position="30"/>
        <end position="76"/>
    </location>
</feature>
<feature type="region of interest" description="Disordered" evidence="6">
    <location>
        <begin position="462"/>
        <end position="499"/>
    </location>
</feature>
<feature type="short sequence motif" description="Nuclear localization signal" evidence="1">
    <location>
        <begin position="114"/>
        <end position="116"/>
    </location>
</feature>
<feature type="compositionally biased region" description="Polar residues" evidence="6">
    <location>
        <begin position="30"/>
        <end position="40"/>
    </location>
</feature>
<feature type="compositionally biased region" description="Polar residues" evidence="6">
    <location>
        <begin position="60"/>
        <end position="70"/>
    </location>
</feature>
<feature type="compositionally biased region" description="Polar residues" evidence="6">
    <location>
        <begin position="480"/>
        <end position="499"/>
    </location>
</feature>
<feature type="active site" description="Proton acceptor" evidence="2 4 5">
    <location>
        <position position="273"/>
    </location>
</feature>
<feature type="binding site" evidence="2 4">
    <location>
        <begin position="153"/>
        <end position="161"/>
    </location>
    <ligand>
        <name>ATP</name>
        <dbReference type="ChEBI" id="CHEBI:30616"/>
    </ligand>
</feature>
<feature type="binding site" evidence="2 4">
    <location>
        <position position="176"/>
    </location>
    <ligand>
        <name>ATP</name>
        <dbReference type="ChEBI" id="CHEBI:30616"/>
    </ligand>
</feature>
<feature type="binding site" evidence="4">
    <location>
        <begin position="226"/>
        <end position="229"/>
    </location>
    <ligand>
        <name>ATP</name>
        <dbReference type="ChEBI" id="CHEBI:30616"/>
    </ligand>
</feature>
<feature type="modified residue" description="Phosphothreonine; by ATM" evidence="1">
    <location>
        <position position="31"/>
    </location>
</feature>
<feature type="modified residue" description="Phosphotyrosine" evidence="1">
    <location>
        <position position="307"/>
    </location>
</feature>
<feature type="modified residue" description="Phosphoserine; by ATM" evidence="1">
    <location>
        <position position="367"/>
    </location>
</feature>
<name>DYRK2_CHICK</name>
<sequence length="526" mass="59437">MNEHLHVGSHGQIQVQQLFEDNSNKRTVLTTQPNGLTTLGKSGLPVVQDRQSESAHRRQGSSSSLKSTDGTGKVKASVMTPEQAMKQYMQKLTTFEHNEIFGYTEIYFLGPNAKKRQGVIGGPNNCGYDDDQGSYIQVPHDHIAYRYEVLKVIGKGSFGQVVKAYDHKMHQHVALKMVRNEKRFHRQAAEEIRILEHLRKQDKDNNMNVIHMLENFTFRSHICMTFELLSMNLYELIKKNKFQGFSLPLVRKFAHSILQCLDALHKNRIIHCDLKPENILLKQQGRSGIKVIDFGSSCYEHQRVYTYIQSRFYRAPEVILGARYGMPIDMWSLGCILAELLTGYPLLPGEDEGDQLACMIELLGMPSPKLLDSSKRAKNFVSSKGYPRYCTITTLSDGSIILNGGRSRRGKLRGPPESREWGNALKGCDDPLFLDFLKQCLEWDPAIRMTPSQALRHPWLRRRLPKPPTGEKASAKRITESTGAITSISKLPPTSSSASKLRTNLAQMTDANGNIQQRTVLPKLVS</sequence>
<comment type="function">
    <text evidence="1">Serine/threonine-protein kinase involved in the control of mitotic transition and the regulation of cellular growth and/or development.</text>
</comment>
<comment type="catalytic activity">
    <reaction evidence="3">
        <text>L-seryl-[protein] + ATP = O-phospho-L-seryl-[protein] + ADP + H(+)</text>
        <dbReference type="Rhea" id="RHEA:17989"/>
        <dbReference type="Rhea" id="RHEA-COMP:9863"/>
        <dbReference type="Rhea" id="RHEA-COMP:11604"/>
        <dbReference type="ChEBI" id="CHEBI:15378"/>
        <dbReference type="ChEBI" id="CHEBI:29999"/>
        <dbReference type="ChEBI" id="CHEBI:30616"/>
        <dbReference type="ChEBI" id="CHEBI:83421"/>
        <dbReference type="ChEBI" id="CHEBI:456216"/>
        <dbReference type="EC" id="2.7.12.1"/>
    </reaction>
</comment>
<comment type="catalytic activity">
    <reaction evidence="3">
        <text>L-threonyl-[protein] + ATP = O-phospho-L-threonyl-[protein] + ADP + H(+)</text>
        <dbReference type="Rhea" id="RHEA:46608"/>
        <dbReference type="Rhea" id="RHEA-COMP:11060"/>
        <dbReference type="Rhea" id="RHEA-COMP:11605"/>
        <dbReference type="ChEBI" id="CHEBI:15378"/>
        <dbReference type="ChEBI" id="CHEBI:30013"/>
        <dbReference type="ChEBI" id="CHEBI:30616"/>
        <dbReference type="ChEBI" id="CHEBI:61977"/>
        <dbReference type="ChEBI" id="CHEBI:456216"/>
        <dbReference type="EC" id="2.7.12.1"/>
    </reaction>
</comment>
<comment type="catalytic activity">
    <reaction evidence="3">
        <text>L-tyrosyl-[protein] + ATP = O-phospho-L-tyrosyl-[protein] + ADP + H(+)</text>
        <dbReference type="Rhea" id="RHEA:10596"/>
        <dbReference type="Rhea" id="RHEA-COMP:10136"/>
        <dbReference type="Rhea" id="RHEA-COMP:20101"/>
        <dbReference type="ChEBI" id="CHEBI:15378"/>
        <dbReference type="ChEBI" id="CHEBI:30616"/>
        <dbReference type="ChEBI" id="CHEBI:46858"/>
        <dbReference type="ChEBI" id="CHEBI:61978"/>
        <dbReference type="ChEBI" id="CHEBI:456216"/>
        <dbReference type="EC" id="2.7.12.1"/>
    </reaction>
</comment>
<comment type="cofactor">
    <cofactor evidence="3">
        <name>Mg(2+)</name>
        <dbReference type="ChEBI" id="CHEBI:18420"/>
    </cofactor>
</comment>
<comment type="cofactor">
    <cofactor evidence="3">
        <name>Mn(2+)</name>
        <dbReference type="ChEBI" id="CHEBI:29035"/>
    </cofactor>
</comment>
<comment type="activity regulation">
    <text evidence="3">Autophosphorylates on tyrosine residues.</text>
</comment>
<comment type="subunit">
    <text evidence="1">Interacts with MDM2.</text>
</comment>
<comment type="subcellular location">
    <subcellularLocation>
        <location evidence="3">Cytoplasm</location>
    </subcellularLocation>
    <subcellularLocation>
        <location evidence="3">Nucleus</location>
    </subcellularLocation>
</comment>
<comment type="PTM">
    <text evidence="1">Phosphorylated on serine/threonine residues. Phosphorylation on Thr-31 and Ser-367 by ATM in response to genotoxic stress disrupts MDM2 binding and prevents MDM2-mediated ubiquitination and subsequent proteasome degradation, thus promoting p53/TP53-mediated apoptosis (By similarity).</text>
</comment>
<comment type="PTM">
    <text evidence="1">Ubiquitination in nucleus by MDM2 in normal conditions leads to proteasome degradation.</text>
</comment>
<comment type="similarity">
    <text evidence="7">Belongs to the protein kinase superfamily. CMGC Ser/Thr protein kinase family. MNB/DYRK subfamily.</text>
</comment>
<dbReference type="EC" id="2.7.12.1" evidence="3"/>
<dbReference type="EMBL" id="AJ720691">
    <property type="protein sequence ID" value="CAG32350.1"/>
    <property type="molecule type" value="mRNA"/>
</dbReference>
<dbReference type="RefSeq" id="NP_001026651.1">
    <property type="nucleotide sequence ID" value="NM_001031480.2"/>
</dbReference>
<dbReference type="RefSeq" id="XP_015137471.1">
    <property type="nucleotide sequence ID" value="XM_015281985.1"/>
</dbReference>
<dbReference type="RefSeq" id="XP_015137476.1">
    <property type="nucleotide sequence ID" value="XM_015281990.4"/>
</dbReference>
<dbReference type="RefSeq" id="XP_046764508.1">
    <property type="nucleotide sequence ID" value="XM_046908552.1"/>
</dbReference>
<dbReference type="SMR" id="Q5ZIU3"/>
<dbReference type="FunCoup" id="Q5ZIU3">
    <property type="interactions" value="2568"/>
</dbReference>
<dbReference type="STRING" id="9031.ENSGALP00000068356"/>
<dbReference type="PaxDb" id="9031-ENSGALP00000016084"/>
<dbReference type="Ensembl" id="ENSGALT00010028530.1">
    <property type="protein sequence ID" value="ENSGALP00010016373.1"/>
    <property type="gene ID" value="ENSGALG00010011926.1"/>
</dbReference>
<dbReference type="Ensembl" id="ENSGALT00010028535.1">
    <property type="protein sequence ID" value="ENSGALP00010016378.1"/>
    <property type="gene ID" value="ENSGALG00010011926.1"/>
</dbReference>
<dbReference type="Ensembl" id="ENSGALT00010028538.1">
    <property type="protein sequence ID" value="ENSGALP00010016379.1"/>
    <property type="gene ID" value="ENSGALG00010011926.1"/>
</dbReference>
<dbReference type="Ensembl" id="ENSGALT00010028541.1">
    <property type="protein sequence ID" value="ENSGALP00010016382.1"/>
    <property type="gene ID" value="ENSGALG00010011926.1"/>
</dbReference>
<dbReference type="Ensembl" id="ENSGALT00010028543.1">
    <property type="protein sequence ID" value="ENSGALP00010016384.1"/>
    <property type="gene ID" value="ENSGALG00010011926.1"/>
</dbReference>
<dbReference type="GeneID" id="427864"/>
<dbReference type="KEGG" id="gga:427864"/>
<dbReference type="CTD" id="8445"/>
<dbReference type="VEuPathDB" id="HostDB:geneid_427864"/>
<dbReference type="eggNOG" id="KOG0667">
    <property type="taxonomic scope" value="Eukaryota"/>
</dbReference>
<dbReference type="GeneTree" id="ENSGT00940000158113"/>
<dbReference type="HOGENOM" id="CLU_000288_5_13_1"/>
<dbReference type="InParanoid" id="Q5ZIU3"/>
<dbReference type="OrthoDB" id="9332038at2759"/>
<dbReference type="PhylomeDB" id="Q5ZIU3"/>
<dbReference type="TreeFam" id="TF314624"/>
<dbReference type="Reactome" id="R-GGA-6804756">
    <property type="pathway name" value="Regulation of TP53 Activity through Phosphorylation"/>
</dbReference>
<dbReference type="PRO" id="PR:Q5ZIU3"/>
<dbReference type="Proteomes" id="UP000000539">
    <property type="component" value="Chromosome 1"/>
</dbReference>
<dbReference type="Bgee" id="ENSGALG00000009901">
    <property type="expression patterns" value="Expressed in skeletal muscle tissue and 12 other cell types or tissues"/>
</dbReference>
<dbReference type="GO" id="GO:0005737">
    <property type="term" value="C:cytoplasm"/>
    <property type="evidence" value="ECO:0000250"/>
    <property type="project" value="UniProtKB"/>
</dbReference>
<dbReference type="GO" id="GO:0005856">
    <property type="term" value="C:cytoskeleton"/>
    <property type="evidence" value="ECO:0000318"/>
    <property type="project" value="GO_Central"/>
</dbReference>
<dbReference type="GO" id="GO:0005634">
    <property type="term" value="C:nucleus"/>
    <property type="evidence" value="ECO:0000250"/>
    <property type="project" value="UniProtKB"/>
</dbReference>
<dbReference type="GO" id="GO:0005524">
    <property type="term" value="F:ATP binding"/>
    <property type="evidence" value="ECO:0000250"/>
    <property type="project" value="UniProtKB"/>
</dbReference>
<dbReference type="GO" id="GO:0000287">
    <property type="term" value="F:magnesium ion binding"/>
    <property type="evidence" value="ECO:0000250"/>
    <property type="project" value="UniProtKB"/>
</dbReference>
<dbReference type="GO" id="GO:0030145">
    <property type="term" value="F:manganese ion binding"/>
    <property type="evidence" value="ECO:0000250"/>
    <property type="project" value="UniProtKB"/>
</dbReference>
<dbReference type="GO" id="GO:0106310">
    <property type="term" value="F:protein serine kinase activity"/>
    <property type="evidence" value="ECO:0007669"/>
    <property type="project" value="RHEA"/>
</dbReference>
<dbReference type="GO" id="GO:0004674">
    <property type="term" value="F:protein serine/threonine kinase activity"/>
    <property type="evidence" value="ECO:0000250"/>
    <property type="project" value="UniProtKB"/>
</dbReference>
<dbReference type="GO" id="GO:0004712">
    <property type="term" value="F:protein serine/threonine/tyrosine kinase activity"/>
    <property type="evidence" value="ECO:0007669"/>
    <property type="project" value="UniProtKB-EC"/>
</dbReference>
<dbReference type="GO" id="GO:0004713">
    <property type="term" value="F:protein tyrosine kinase activity"/>
    <property type="evidence" value="ECO:0000250"/>
    <property type="project" value="UniProtKB"/>
</dbReference>
<dbReference type="GO" id="GO:0042771">
    <property type="term" value="P:intrinsic apoptotic signaling pathway in response to DNA damage by p53 class mediator"/>
    <property type="evidence" value="ECO:0000250"/>
    <property type="project" value="UniProtKB"/>
</dbReference>
<dbReference type="GO" id="GO:0045725">
    <property type="term" value="P:positive regulation of glycogen biosynthetic process"/>
    <property type="evidence" value="ECO:0000250"/>
    <property type="project" value="UniProtKB"/>
</dbReference>
<dbReference type="GO" id="GO:0006468">
    <property type="term" value="P:protein phosphorylation"/>
    <property type="evidence" value="ECO:0000250"/>
    <property type="project" value="UniProtKB"/>
</dbReference>
<dbReference type="CDD" id="cd14224">
    <property type="entry name" value="PKc_DYRK2_3"/>
    <property type="match status" value="1"/>
</dbReference>
<dbReference type="FunFam" id="3.30.10.30:FF:000001">
    <property type="entry name" value="Dual specificity tyrosine-phosphorylation-regulated kinase 2"/>
    <property type="match status" value="1"/>
</dbReference>
<dbReference type="FunFam" id="1.10.510.10:FF:000112">
    <property type="entry name" value="Putative dual specificity tyrosine-phosphorylation-regulated kinase 2"/>
    <property type="match status" value="1"/>
</dbReference>
<dbReference type="FunFam" id="3.30.200.20:FF:000127">
    <property type="entry name" value="Putative dual specificity tyrosine-phosphorylation-regulated kinase 2"/>
    <property type="match status" value="1"/>
</dbReference>
<dbReference type="Gene3D" id="3.30.10.30">
    <property type="entry name" value="DYRK"/>
    <property type="match status" value="1"/>
</dbReference>
<dbReference type="Gene3D" id="3.30.200.20">
    <property type="entry name" value="Phosphorylase Kinase, domain 1"/>
    <property type="match status" value="1"/>
</dbReference>
<dbReference type="Gene3D" id="1.10.510.10">
    <property type="entry name" value="Transferase(Phosphotransferase) domain 1"/>
    <property type="match status" value="1"/>
</dbReference>
<dbReference type="InterPro" id="IPR042521">
    <property type="entry name" value="DYRK"/>
</dbReference>
<dbReference type="InterPro" id="IPR011009">
    <property type="entry name" value="Kinase-like_dom_sf"/>
</dbReference>
<dbReference type="InterPro" id="IPR000719">
    <property type="entry name" value="Prot_kinase_dom"/>
</dbReference>
<dbReference type="InterPro" id="IPR017441">
    <property type="entry name" value="Protein_kinase_ATP_BS"/>
</dbReference>
<dbReference type="InterPro" id="IPR008271">
    <property type="entry name" value="Ser/Thr_kinase_AS"/>
</dbReference>
<dbReference type="InterPro" id="IPR050494">
    <property type="entry name" value="Ser_Thr_dual-spec_kinase"/>
</dbReference>
<dbReference type="PANTHER" id="PTHR24058">
    <property type="entry name" value="DUAL SPECIFICITY PROTEIN KINASE"/>
    <property type="match status" value="1"/>
</dbReference>
<dbReference type="PANTHER" id="PTHR24058:SF51">
    <property type="entry name" value="DUAL SPECIFICITY TYROSINE-PHOSPHORYLATION-REGULATED KINASE 2"/>
    <property type="match status" value="1"/>
</dbReference>
<dbReference type="Pfam" id="PF00069">
    <property type="entry name" value="Pkinase"/>
    <property type="match status" value="1"/>
</dbReference>
<dbReference type="SMART" id="SM00220">
    <property type="entry name" value="S_TKc"/>
    <property type="match status" value="1"/>
</dbReference>
<dbReference type="SUPFAM" id="SSF56112">
    <property type="entry name" value="Protein kinase-like (PK-like)"/>
    <property type="match status" value="1"/>
</dbReference>
<dbReference type="PROSITE" id="PS00107">
    <property type="entry name" value="PROTEIN_KINASE_ATP"/>
    <property type="match status" value="1"/>
</dbReference>
<dbReference type="PROSITE" id="PS50011">
    <property type="entry name" value="PROTEIN_KINASE_DOM"/>
    <property type="match status" value="1"/>
</dbReference>
<dbReference type="PROSITE" id="PS00108">
    <property type="entry name" value="PROTEIN_KINASE_ST"/>
    <property type="match status" value="1"/>
</dbReference>
<proteinExistence type="evidence at transcript level"/>
<organism>
    <name type="scientific">Gallus gallus</name>
    <name type="common">Chicken</name>
    <dbReference type="NCBI Taxonomy" id="9031"/>
    <lineage>
        <taxon>Eukaryota</taxon>
        <taxon>Metazoa</taxon>
        <taxon>Chordata</taxon>
        <taxon>Craniata</taxon>
        <taxon>Vertebrata</taxon>
        <taxon>Euteleostomi</taxon>
        <taxon>Archelosauria</taxon>
        <taxon>Archosauria</taxon>
        <taxon>Dinosauria</taxon>
        <taxon>Saurischia</taxon>
        <taxon>Theropoda</taxon>
        <taxon>Coelurosauria</taxon>
        <taxon>Aves</taxon>
        <taxon>Neognathae</taxon>
        <taxon>Galloanserae</taxon>
        <taxon>Galliformes</taxon>
        <taxon>Phasianidae</taxon>
        <taxon>Phasianinae</taxon>
        <taxon>Gallus</taxon>
    </lineage>
</organism>
<keyword id="KW-0053">Apoptosis</keyword>
<keyword id="KW-0067">ATP-binding</keyword>
<keyword id="KW-0963">Cytoplasm</keyword>
<keyword id="KW-0418">Kinase</keyword>
<keyword id="KW-0460">Magnesium</keyword>
<keyword id="KW-0464">Manganese</keyword>
<keyword id="KW-0547">Nucleotide-binding</keyword>
<keyword id="KW-0539">Nucleus</keyword>
<keyword id="KW-0597">Phosphoprotein</keyword>
<keyword id="KW-1185">Reference proteome</keyword>
<keyword id="KW-0723">Serine/threonine-protein kinase</keyword>
<keyword id="KW-0808">Transferase</keyword>
<keyword id="KW-0829">Tyrosine-protein kinase</keyword>
<keyword id="KW-0832">Ubl conjugation</keyword>
<protein>
    <recommendedName>
        <fullName>Dual specificity tyrosine-phosphorylation-regulated kinase 2</fullName>
        <ecNumber evidence="3">2.7.12.1</ecNumber>
    </recommendedName>
</protein>
<gene>
    <name evidence="3" type="primary">DYRK2</name>
    <name type="ORF">RCJMB04_23i19</name>
</gene>
<accession>Q5ZIU3</accession>
<reference evidence="8" key="1">
    <citation type="journal article" date="2005" name="Genome Biol.">
        <title>Full-length cDNAs from chicken bursal lymphocytes to facilitate gene function analysis.</title>
        <authorList>
            <person name="Caldwell R.B."/>
            <person name="Kierzek A.M."/>
            <person name="Arakawa H."/>
            <person name="Bezzubov Y."/>
            <person name="Zaim J."/>
            <person name="Fiedler P."/>
            <person name="Kutter S."/>
            <person name="Blagodatski A."/>
            <person name="Kostovska D."/>
            <person name="Koter M."/>
            <person name="Plachy J."/>
            <person name="Carninci P."/>
            <person name="Hayashizaki Y."/>
            <person name="Buerstedde J.-M."/>
        </authorList>
    </citation>
    <scope>NUCLEOTIDE SEQUENCE [LARGE SCALE MRNA]</scope>
    <source>
        <strain evidence="8">CB</strain>
        <tissue evidence="8">Bursa of Fabricius</tissue>
    </source>
</reference>
<evidence type="ECO:0000250" key="1"/>
<evidence type="ECO:0000250" key="2">
    <source>
        <dbReference type="UniProtKB" id="P28523"/>
    </source>
</evidence>
<evidence type="ECO:0000250" key="3">
    <source>
        <dbReference type="UniProtKB" id="Q92630"/>
    </source>
</evidence>
<evidence type="ECO:0000255" key="4">
    <source>
        <dbReference type="PROSITE-ProRule" id="PRU00159"/>
    </source>
</evidence>
<evidence type="ECO:0000255" key="5">
    <source>
        <dbReference type="PROSITE-ProRule" id="PRU10027"/>
    </source>
</evidence>
<evidence type="ECO:0000256" key="6">
    <source>
        <dbReference type="SAM" id="MobiDB-lite"/>
    </source>
</evidence>
<evidence type="ECO:0000305" key="7"/>
<evidence type="ECO:0000312" key="8">
    <source>
        <dbReference type="EMBL" id="CAG32350.1"/>
    </source>
</evidence>